<feature type="chain" id="PRO_1000081028" description="Xylose isomerase">
    <location>
        <begin position="1"/>
        <end position="434"/>
    </location>
</feature>
<feature type="active site" evidence="1">
    <location>
        <position position="99"/>
    </location>
</feature>
<feature type="active site" evidence="1">
    <location>
        <position position="102"/>
    </location>
</feature>
<feature type="binding site" evidence="1">
    <location>
        <position position="230"/>
    </location>
    <ligand>
        <name>Mg(2+)</name>
        <dbReference type="ChEBI" id="CHEBI:18420"/>
        <label>1</label>
    </ligand>
</feature>
<feature type="binding site" evidence="1">
    <location>
        <position position="266"/>
    </location>
    <ligand>
        <name>Mg(2+)</name>
        <dbReference type="ChEBI" id="CHEBI:18420"/>
        <label>1</label>
    </ligand>
</feature>
<feature type="binding site" evidence="1">
    <location>
        <position position="266"/>
    </location>
    <ligand>
        <name>Mg(2+)</name>
        <dbReference type="ChEBI" id="CHEBI:18420"/>
        <label>2</label>
    </ligand>
</feature>
<feature type="binding site" evidence="1">
    <location>
        <position position="269"/>
    </location>
    <ligand>
        <name>Mg(2+)</name>
        <dbReference type="ChEBI" id="CHEBI:18420"/>
        <label>2</label>
    </ligand>
</feature>
<feature type="binding site" evidence="1">
    <location>
        <position position="294"/>
    </location>
    <ligand>
        <name>Mg(2+)</name>
        <dbReference type="ChEBI" id="CHEBI:18420"/>
        <label>1</label>
    </ligand>
</feature>
<feature type="binding site" evidence="1">
    <location>
        <position position="305"/>
    </location>
    <ligand>
        <name>Mg(2+)</name>
        <dbReference type="ChEBI" id="CHEBI:18420"/>
        <label>2</label>
    </ligand>
</feature>
<feature type="binding site" evidence="1">
    <location>
        <position position="307"/>
    </location>
    <ligand>
        <name>Mg(2+)</name>
        <dbReference type="ChEBI" id="CHEBI:18420"/>
        <label>2</label>
    </ligand>
</feature>
<feature type="binding site" evidence="1">
    <location>
        <position position="337"/>
    </location>
    <ligand>
        <name>Mg(2+)</name>
        <dbReference type="ChEBI" id="CHEBI:18420"/>
        <label>1</label>
    </ligand>
</feature>
<sequence>MSDFFAGIPAVTYEGPEARSDFAFRHYNPDEMVMGKRMEDQLRFAVAWWHSFAWEGGDPFGGPTFQRPWFGDTLDHARAKADAAFEMFRILNVPFYCFHDADIRPEGASFAETTANLEAMVDYLGQKQEASGKRLLWGTANLFSHRRYMAGAATNPDPDVFAYAAATIKTCMDATHKLGGANYVLWGGREGYETLLNTDLGREREQAGRMLQMVVDYKHKIGFEGTILLEPKPQEPTKHQYDYDVATVFSFLSEFGLQDEVKMNIEQGHAILAGHSFEHELALAREFGILGSIDMNRNDYQSGWDTDQFPNNIPEVALAYYEILRAGGFDTGGTNFDSKLRRQSLDPADLIAAHVAAMDVCAAGLKAAARMLEDGELEQRREDRYAGWRAPSAEAMLNGGKLEDCFAHVMETGLDPQPVSGGQERLEALVARYL</sequence>
<dbReference type="EC" id="5.3.1.5" evidence="1"/>
<dbReference type="EMBL" id="CP000830">
    <property type="protein sequence ID" value="ABV93735.1"/>
    <property type="molecule type" value="Genomic_DNA"/>
</dbReference>
<dbReference type="RefSeq" id="WP_012178666.1">
    <property type="nucleotide sequence ID" value="NC_009952.1"/>
</dbReference>
<dbReference type="SMR" id="A8LP53"/>
<dbReference type="STRING" id="398580.Dshi_1996"/>
<dbReference type="KEGG" id="dsh:Dshi_1996"/>
<dbReference type="eggNOG" id="COG2115">
    <property type="taxonomic scope" value="Bacteria"/>
</dbReference>
<dbReference type="HOGENOM" id="CLU_037261_1_0_5"/>
<dbReference type="OrthoDB" id="9763981at2"/>
<dbReference type="Proteomes" id="UP000006833">
    <property type="component" value="Chromosome"/>
</dbReference>
<dbReference type="GO" id="GO:0005737">
    <property type="term" value="C:cytoplasm"/>
    <property type="evidence" value="ECO:0007669"/>
    <property type="project" value="UniProtKB-SubCell"/>
</dbReference>
<dbReference type="GO" id="GO:0000287">
    <property type="term" value="F:magnesium ion binding"/>
    <property type="evidence" value="ECO:0007669"/>
    <property type="project" value="UniProtKB-UniRule"/>
</dbReference>
<dbReference type="GO" id="GO:0009045">
    <property type="term" value="F:xylose isomerase activity"/>
    <property type="evidence" value="ECO:0007669"/>
    <property type="project" value="UniProtKB-UniRule"/>
</dbReference>
<dbReference type="GO" id="GO:0042732">
    <property type="term" value="P:D-xylose metabolic process"/>
    <property type="evidence" value="ECO:0007669"/>
    <property type="project" value="UniProtKB-UniRule"/>
</dbReference>
<dbReference type="Gene3D" id="3.20.20.150">
    <property type="entry name" value="Divalent-metal-dependent TIM barrel enzymes"/>
    <property type="match status" value="1"/>
</dbReference>
<dbReference type="HAMAP" id="MF_00455">
    <property type="entry name" value="Xylose_isom_A"/>
    <property type="match status" value="1"/>
</dbReference>
<dbReference type="InterPro" id="IPR036237">
    <property type="entry name" value="Xyl_isomerase-like_sf"/>
</dbReference>
<dbReference type="InterPro" id="IPR013452">
    <property type="entry name" value="Xylose_isom_bac"/>
</dbReference>
<dbReference type="InterPro" id="IPR001998">
    <property type="entry name" value="Xylose_isomerase"/>
</dbReference>
<dbReference type="NCBIfam" id="NF003998">
    <property type="entry name" value="PRK05474.1"/>
    <property type="match status" value="1"/>
</dbReference>
<dbReference type="NCBIfam" id="TIGR02630">
    <property type="entry name" value="xylose_isom_A"/>
    <property type="match status" value="1"/>
</dbReference>
<dbReference type="PANTHER" id="PTHR48408">
    <property type="match status" value="1"/>
</dbReference>
<dbReference type="PANTHER" id="PTHR48408:SF1">
    <property type="entry name" value="XYLOSE ISOMERASE"/>
    <property type="match status" value="1"/>
</dbReference>
<dbReference type="PRINTS" id="PR00688">
    <property type="entry name" value="XYLOSISMRASE"/>
</dbReference>
<dbReference type="SUPFAM" id="SSF51658">
    <property type="entry name" value="Xylose isomerase-like"/>
    <property type="match status" value="1"/>
</dbReference>
<dbReference type="PROSITE" id="PS51415">
    <property type="entry name" value="XYLOSE_ISOMERASE"/>
    <property type="match status" value="1"/>
</dbReference>
<reference key="1">
    <citation type="journal article" date="2010" name="ISME J.">
        <title>The complete genome sequence of the algal symbiont Dinoroseobacter shibae: a hitchhiker's guide to life in the sea.</title>
        <authorList>
            <person name="Wagner-Dobler I."/>
            <person name="Ballhausen B."/>
            <person name="Berger M."/>
            <person name="Brinkhoff T."/>
            <person name="Buchholz I."/>
            <person name="Bunk B."/>
            <person name="Cypionka H."/>
            <person name="Daniel R."/>
            <person name="Drepper T."/>
            <person name="Gerdts G."/>
            <person name="Hahnke S."/>
            <person name="Han C."/>
            <person name="Jahn D."/>
            <person name="Kalhoefer D."/>
            <person name="Kiss H."/>
            <person name="Klenk H.P."/>
            <person name="Kyrpides N."/>
            <person name="Liebl W."/>
            <person name="Liesegang H."/>
            <person name="Meincke L."/>
            <person name="Pati A."/>
            <person name="Petersen J."/>
            <person name="Piekarski T."/>
            <person name="Pommerenke C."/>
            <person name="Pradella S."/>
            <person name="Pukall R."/>
            <person name="Rabus R."/>
            <person name="Stackebrandt E."/>
            <person name="Thole S."/>
            <person name="Thompson L."/>
            <person name="Tielen P."/>
            <person name="Tomasch J."/>
            <person name="von Jan M."/>
            <person name="Wanphrut N."/>
            <person name="Wichels A."/>
            <person name="Zech H."/>
            <person name="Simon M."/>
        </authorList>
    </citation>
    <scope>NUCLEOTIDE SEQUENCE [LARGE SCALE GENOMIC DNA]</scope>
    <source>
        <strain>DSM 16493 / NCIMB 14021 / DFL 12</strain>
    </source>
</reference>
<protein>
    <recommendedName>
        <fullName evidence="1">Xylose isomerase</fullName>
        <ecNumber evidence="1">5.3.1.5</ecNumber>
    </recommendedName>
</protein>
<comment type="catalytic activity">
    <reaction evidence="1">
        <text>alpha-D-xylose = alpha-D-xylulofuranose</text>
        <dbReference type="Rhea" id="RHEA:22816"/>
        <dbReference type="ChEBI" id="CHEBI:28518"/>
        <dbReference type="ChEBI" id="CHEBI:188998"/>
        <dbReference type="EC" id="5.3.1.5"/>
    </reaction>
</comment>
<comment type="cofactor">
    <cofactor evidence="1">
        <name>Mg(2+)</name>
        <dbReference type="ChEBI" id="CHEBI:18420"/>
    </cofactor>
    <text evidence="1">Binds 2 magnesium ions per subunit.</text>
</comment>
<comment type="subunit">
    <text evidence="1">Homotetramer.</text>
</comment>
<comment type="subcellular location">
    <subcellularLocation>
        <location evidence="1">Cytoplasm</location>
    </subcellularLocation>
</comment>
<comment type="similarity">
    <text evidence="1">Belongs to the xylose isomerase family.</text>
</comment>
<accession>A8LP53</accession>
<gene>
    <name evidence="1" type="primary">xylA</name>
    <name type="ordered locus">Dshi_1996</name>
</gene>
<evidence type="ECO:0000255" key="1">
    <source>
        <dbReference type="HAMAP-Rule" id="MF_00455"/>
    </source>
</evidence>
<proteinExistence type="inferred from homology"/>
<keyword id="KW-0119">Carbohydrate metabolism</keyword>
<keyword id="KW-0963">Cytoplasm</keyword>
<keyword id="KW-0413">Isomerase</keyword>
<keyword id="KW-0460">Magnesium</keyword>
<keyword id="KW-0479">Metal-binding</keyword>
<keyword id="KW-1185">Reference proteome</keyword>
<keyword id="KW-0859">Xylose metabolism</keyword>
<organism>
    <name type="scientific">Dinoroseobacter shibae (strain DSM 16493 / NCIMB 14021 / DFL 12)</name>
    <dbReference type="NCBI Taxonomy" id="398580"/>
    <lineage>
        <taxon>Bacteria</taxon>
        <taxon>Pseudomonadati</taxon>
        <taxon>Pseudomonadota</taxon>
        <taxon>Alphaproteobacteria</taxon>
        <taxon>Rhodobacterales</taxon>
        <taxon>Roseobacteraceae</taxon>
        <taxon>Dinoroseobacter</taxon>
    </lineage>
</organism>
<name>XYLA_DINSH</name>